<gene>
    <name type="primary">norA</name>
    <name type="ordered locus">SAV0695</name>
</gene>
<protein>
    <recommendedName>
        <fullName>Quinolone resistance protein NorA</fullName>
    </recommendedName>
</protein>
<dbReference type="EMBL" id="BA000017">
    <property type="protein sequence ID" value="BAB56857.1"/>
    <property type="molecule type" value="Genomic_DNA"/>
</dbReference>
<dbReference type="RefSeq" id="WP_001041274.1">
    <property type="nucleotide sequence ID" value="NC_002758.2"/>
</dbReference>
<dbReference type="SMR" id="P0A0J4"/>
<dbReference type="KEGG" id="sav:SAV0695"/>
<dbReference type="HOGENOM" id="CLU_001265_10_11_9"/>
<dbReference type="PhylomeDB" id="P0A0J4"/>
<dbReference type="Proteomes" id="UP000002481">
    <property type="component" value="Chromosome"/>
</dbReference>
<dbReference type="GO" id="GO:0005886">
    <property type="term" value="C:plasma membrane"/>
    <property type="evidence" value="ECO:0007669"/>
    <property type="project" value="UniProtKB-SubCell"/>
</dbReference>
<dbReference type="GO" id="GO:0042910">
    <property type="term" value="F:xenobiotic transmembrane transporter activity"/>
    <property type="evidence" value="ECO:0007669"/>
    <property type="project" value="InterPro"/>
</dbReference>
<dbReference type="CDD" id="cd17325">
    <property type="entry name" value="MFS_MdtG_SLC18_like"/>
    <property type="match status" value="1"/>
</dbReference>
<dbReference type="Gene3D" id="1.20.1250.20">
    <property type="entry name" value="MFS general substrate transporter like domains"/>
    <property type="match status" value="1"/>
</dbReference>
<dbReference type="InterPro" id="IPR011701">
    <property type="entry name" value="MFS"/>
</dbReference>
<dbReference type="InterPro" id="IPR020846">
    <property type="entry name" value="MFS_dom"/>
</dbReference>
<dbReference type="InterPro" id="IPR050189">
    <property type="entry name" value="MFS_Efflux_Transporters"/>
</dbReference>
<dbReference type="InterPro" id="IPR036259">
    <property type="entry name" value="MFS_trans_sf"/>
</dbReference>
<dbReference type="InterPro" id="IPR004734">
    <property type="entry name" value="Multidrug-R"/>
</dbReference>
<dbReference type="InterPro" id="IPR001958">
    <property type="entry name" value="Tet-R_TetA/multi-R_MdtG-like"/>
</dbReference>
<dbReference type="NCBIfam" id="TIGR00880">
    <property type="entry name" value="2_A_01_02"/>
    <property type="match status" value="1"/>
</dbReference>
<dbReference type="PANTHER" id="PTHR43124:SF3">
    <property type="entry name" value="CHLORAMPHENICOL EFFLUX PUMP RV0191"/>
    <property type="match status" value="1"/>
</dbReference>
<dbReference type="PANTHER" id="PTHR43124">
    <property type="entry name" value="PURINE EFFLUX PUMP PBUE"/>
    <property type="match status" value="1"/>
</dbReference>
<dbReference type="Pfam" id="PF07690">
    <property type="entry name" value="MFS_1"/>
    <property type="match status" value="1"/>
</dbReference>
<dbReference type="PRINTS" id="PR01035">
    <property type="entry name" value="TCRTETA"/>
</dbReference>
<dbReference type="SUPFAM" id="SSF103473">
    <property type="entry name" value="MFS general substrate transporter"/>
    <property type="match status" value="1"/>
</dbReference>
<dbReference type="PROSITE" id="PS50850">
    <property type="entry name" value="MFS"/>
    <property type="match status" value="1"/>
</dbReference>
<sequence length="388" mass="42265">MNKQIFVLYFNIFLIFLGIGLVIPVLPVYLKDLGLTGSDLGLLVAAFALSQMIISPFGGTLADKLGKKLIICIGLILFSVSEFMFAVGHNFSVLMLSRVIGGMSAGMVMPGVTGLIADISPSHQKAKNFGYMSAIINSGFILGPGIGGFMAEVSHRMPFYFAGALGILAFIMSIVLIHDPKKSTTSGFQKLEPQLLTKINWKVFITPVILTLVLSFGLSAFETLYSLYTADKVNYSPKDISIAITGGGIFGALFQIYFFDKFMKYFSELTFIAWSLLYSVVVLILLVFANGYWSIMLISFVVFIGFDMIRPAITNYFSNIAGERQGFAGGLNSTFTSMGNFIGPLIAGALFDVHIEAPIYMAIGVSLAGVVIVLIEKQHRAKLKEQNM</sequence>
<keyword id="KW-1003">Cell membrane</keyword>
<keyword id="KW-0472">Membrane</keyword>
<keyword id="KW-0812">Transmembrane</keyword>
<keyword id="KW-1133">Transmembrane helix</keyword>
<keyword id="KW-0813">Transport</keyword>
<proteinExistence type="inferred from homology"/>
<comment type="function">
    <text evidence="1">Involved in quinolone resistance. May constitute a membrane-associated active efflux pump of hydrophilic quinolones (By similarity).</text>
</comment>
<comment type="subcellular location">
    <subcellularLocation>
        <location evidence="3">Cell membrane</location>
        <topology evidence="3">Multi-pass membrane protein</topology>
    </subcellularLocation>
</comment>
<comment type="similarity">
    <text evidence="3">Belongs to the major facilitator superfamily. TCR/Tet family.</text>
</comment>
<feature type="chain" id="PRO_0000173369" description="Quinolone resistance protein NorA">
    <location>
        <begin position="1"/>
        <end position="388"/>
    </location>
</feature>
<feature type="transmembrane region" description="Helical" evidence="2">
    <location>
        <begin position="5"/>
        <end position="25"/>
    </location>
</feature>
<feature type="transmembrane region" description="Helical" evidence="2">
    <location>
        <begin position="42"/>
        <end position="62"/>
    </location>
</feature>
<feature type="transmembrane region" description="Helical" evidence="2">
    <location>
        <begin position="69"/>
        <end position="89"/>
    </location>
</feature>
<feature type="transmembrane region" description="Helical" evidence="2">
    <location>
        <begin position="99"/>
        <end position="119"/>
    </location>
</feature>
<feature type="transmembrane region" description="Helical" evidence="2">
    <location>
        <begin position="129"/>
        <end position="149"/>
    </location>
</feature>
<feature type="transmembrane region" description="Helical" evidence="2">
    <location>
        <begin position="157"/>
        <end position="177"/>
    </location>
</feature>
<feature type="transmembrane region" description="Helical" evidence="2">
    <location>
        <begin position="201"/>
        <end position="221"/>
    </location>
</feature>
<feature type="transmembrane region" description="Helical" evidence="2">
    <location>
        <begin position="239"/>
        <end position="259"/>
    </location>
</feature>
<feature type="transmembrane region" description="Helical" evidence="2">
    <location>
        <begin position="269"/>
        <end position="289"/>
    </location>
</feature>
<feature type="transmembrane region" description="Helical" evidence="2">
    <location>
        <begin position="293"/>
        <end position="313"/>
    </location>
</feature>
<feature type="transmembrane region" description="Helical" evidence="2">
    <location>
        <begin position="331"/>
        <end position="351"/>
    </location>
</feature>
<feature type="transmembrane region" description="Helical" evidence="2">
    <location>
        <begin position="355"/>
        <end position="375"/>
    </location>
</feature>
<evidence type="ECO:0000250" key="1"/>
<evidence type="ECO:0000255" key="2"/>
<evidence type="ECO:0000305" key="3"/>
<accession>P0A0J4</accession>
<accession>P21191</accession>
<organism>
    <name type="scientific">Staphylococcus aureus (strain Mu50 / ATCC 700699)</name>
    <dbReference type="NCBI Taxonomy" id="158878"/>
    <lineage>
        <taxon>Bacteria</taxon>
        <taxon>Bacillati</taxon>
        <taxon>Bacillota</taxon>
        <taxon>Bacilli</taxon>
        <taxon>Bacillales</taxon>
        <taxon>Staphylococcaceae</taxon>
        <taxon>Staphylococcus</taxon>
    </lineage>
</organism>
<name>NORA_STAAM</name>
<reference key="1">
    <citation type="journal article" date="2001" name="Lancet">
        <title>Whole genome sequencing of meticillin-resistant Staphylococcus aureus.</title>
        <authorList>
            <person name="Kuroda M."/>
            <person name="Ohta T."/>
            <person name="Uchiyama I."/>
            <person name="Baba T."/>
            <person name="Yuzawa H."/>
            <person name="Kobayashi I."/>
            <person name="Cui L."/>
            <person name="Oguchi A."/>
            <person name="Aoki K."/>
            <person name="Nagai Y."/>
            <person name="Lian J.-Q."/>
            <person name="Ito T."/>
            <person name="Kanamori M."/>
            <person name="Matsumaru H."/>
            <person name="Maruyama A."/>
            <person name="Murakami H."/>
            <person name="Hosoyama A."/>
            <person name="Mizutani-Ui Y."/>
            <person name="Takahashi N.K."/>
            <person name="Sawano T."/>
            <person name="Inoue R."/>
            <person name="Kaito C."/>
            <person name="Sekimizu K."/>
            <person name="Hirakawa H."/>
            <person name="Kuhara S."/>
            <person name="Goto S."/>
            <person name="Yabuzaki J."/>
            <person name="Kanehisa M."/>
            <person name="Yamashita A."/>
            <person name="Oshima K."/>
            <person name="Furuya K."/>
            <person name="Yoshino C."/>
            <person name="Shiba T."/>
            <person name="Hattori M."/>
            <person name="Ogasawara N."/>
            <person name="Hayashi H."/>
            <person name="Hiramatsu K."/>
        </authorList>
    </citation>
    <scope>NUCLEOTIDE SEQUENCE [LARGE SCALE GENOMIC DNA]</scope>
    <source>
        <strain>Mu50 / ATCC 700699</strain>
    </source>
</reference>